<gene>
    <name evidence="1" type="primary">diaA</name>
    <name type="ordered locus">SeSA_A3455</name>
</gene>
<keyword id="KW-0235">DNA replication</keyword>
<organism>
    <name type="scientific">Salmonella schwarzengrund (strain CVM19633)</name>
    <dbReference type="NCBI Taxonomy" id="439843"/>
    <lineage>
        <taxon>Bacteria</taxon>
        <taxon>Pseudomonadati</taxon>
        <taxon>Pseudomonadota</taxon>
        <taxon>Gammaproteobacteria</taxon>
        <taxon>Enterobacterales</taxon>
        <taxon>Enterobacteriaceae</taxon>
        <taxon>Salmonella</taxon>
    </lineage>
</organism>
<comment type="function">
    <text evidence="1">Required for the timely initiation of chromosomal replication via direct interactions with the DnaA initiator protein.</text>
</comment>
<comment type="subunit">
    <text evidence="1">Homotetramer; dimer of dimers.</text>
</comment>
<comment type="similarity">
    <text evidence="1">Belongs to the SIS family. DiaA subfamily.</text>
</comment>
<proteinExistence type="inferred from homology"/>
<evidence type="ECO:0000255" key="1">
    <source>
        <dbReference type="HAMAP-Rule" id="MF_01157"/>
    </source>
</evidence>
<dbReference type="EMBL" id="CP001127">
    <property type="protein sequence ID" value="ACF92336.1"/>
    <property type="molecule type" value="Genomic_DNA"/>
</dbReference>
<dbReference type="RefSeq" id="WP_000893481.1">
    <property type="nucleotide sequence ID" value="NC_011094.1"/>
</dbReference>
<dbReference type="SMR" id="B4TWC0"/>
<dbReference type="GeneID" id="66757607"/>
<dbReference type="KEGG" id="sew:SeSA_A3455"/>
<dbReference type="HOGENOM" id="CLU_080999_3_1_6"/>
<dbReference type="Proteomes" id="UP000001865">
    <property type="component" value="Chromosome"/>
</dbReference>
<dbReference type="GO" id="GO:0097367">
    <property type="term" value="F:carbohydrate derivative binding"/>
    <property type="evidence" value="ECO:0007669"/>
    <property type="project" value="InterPro"/>
</dbReference>
<dbReference type="GO" id="GO:1901135">
    <property type="term" value="P:carbohydrate derivative metabolic process"/>
    <property type="evidence" value="ECO:0007669"/>
    <property type="project" value="InterPro"/>
</dbReference>
<dbReference type="GO" id="GO:0006260">
    <property type="term" value="P:DNA replication"/>
    <property type="evidence" value="ECO:0007669"/>
    <property type="project" value="UniProtKB-UniRule"/>
</dbReference>
<dbReference type="CDD" id="cd05006">
    <property type="entry name" value="SIS_GmhA"/>
    <property type="match status" value="1"/>
</dbReference>
<dbReference type="FunFam" id="3.40.50.10490:FF:000006">
    <property type="entry name" value="DnaA initiator-associating protein DiaA"/>
    <property type="match status" value="1"/>
</dbReference>
<dbReference type="Gene3D" id="3.40.50.10490">
    <property type="entry name" value="Glucose-6-phosphate isomerase like protein, domain 1"/>
    <property type="match status" value="1"/>
</dbReference>
<dbReference type="HAMAP" id="MF_01157">
    <property type="entry name" value="SIS_DiaA"/>
    <property type="match status" value="1"/>
</dbReference>
<dbReference type="InterPro" id="IPR023070">
    <property type="entry name" value="DiaA"/>
</dbReference>
<dbReference type="InterPro" id="IPR035461">
    <property type="entry name" value="GmhA/DiaA"/>
</dbReference>
<dbReference type="InterPro" id="IPR001347">
    <property type="entry name" value="SIS_dom"/>
</dbReference>
<dbReference type="InterPro" id="IPR046348">
    <property type="entry name" value="SIS_dom_sf"/>
</dbReference>
<dbReference type="InterPro" id="IPR050099">
    <property type="entry name" value="SIS_GmhA/DiaA_subfam"/>
</dbReference>
<dbReference type="NCBIfam" id="NF008138">
    <property type="entry name" value="PRK10886.1"/>
    <property type="match status" value="1"/>
</dbReference>
<dbReference type="PANTHER" id="PTHR30390:SF6">
    <property type="entry name" value="DNAA INITIATOR-ASSOCIATING PROTEIN DIAA"/>
    <property type="match status" value="1"/>
</dbReference>
<dbReference type="PANTHER" id="PTHR30390">
    <property type="entry name" value="SEDOHEPTULOSE 7-PHOSPHATE ISOMERASE / DNAA INITIATOR-ASSOCIATING FACTOR FOR REPLICATION INITIATION"/>
    <property type="match status" value="1"/>
</dbReference>
<dbReference type="Pfam" id="PF13580">
    <property type="entry name" value="SIS_2"/>
    <property type="match status" value="1"/>
</dbReference>
<dbReference type="SUPFAM" id="SSF53697">
    <property type="entry name" value="SIS domain"/>
    <property type="match status" value="1"/>
</dbReference>
<dbReference type="PROSITE" id="PS51464">
    <property type="entry name" value="SIS"/>
    <property type="match status" value="1"/>
</dbReference>
<protein>
    <recommendedName>
        <fullName evidence="1">DnaA initiator-associating protein DiaA</fullName>
    </recommendedName>
</protein>
<sequence length="196" mass="21109">MLERIKVCFTESIQTQIAAAEALPDAISRAAMTLVHSLLNGNKILCCGNGTSAANAQHFAASMINRFETERPSLPAIALNTDNVVLTAIANDRLHDEVYAKQVRALGHAGDVLLAISTRGNSRDIVKAVEAAVTRDMTIVALTGYDGGELAGLLGPQDVEIRIPSHHSARIQEMHMLTVNCLCDLIDNTLFPHQDD</sequence>
<name>DIAA_SALSV</name>
<feature type="chain" id="PRO_1000137802" description="DnaA initiator-associating protein DiaA">
    <location>
        <begin position="1"/>
        <end position="196"/>
    </location>
</feature>
<feature type="domain" description="SIS" evidence="1">
    <location>
        <begin position="34"/>
        <end position="196"/>
    </location>
</feature>
<accession>B4TWC0</accession>
<reference key="1">
    <citation type="journal article" date="2011" name="J. Bacteriol.">
        <title>Comparative genomics of 28 Salmonella enterica isolates: evidence for CRISPR-mediated adaptive sublineage evolution.</title>
        <authorList>
            <person name="Fricke W.F."/>
            <person name="Mammel M.K."/>
            <person name="McDermott P.F."/>
            <person name="Tartera C."/>
            <person name="White D.G."/>
            <person name="Leclerc J.E."/>
            <person name="Ravel J."/>
            <person name="Cebula T.A."/>
        </authorList>
    </citation>
    <scope>NUCLEOTIDE SEQUENCE [LARGE SCALE GENOMIC DNA]</scope>
    <source>
        <strain>CVM19633</strain>
    </source>
</reference>